<dbReference type="EMBL" id="AL766848">
    <property type="protein sequence ID" value="CAD46677.1"/>
    <property type="molecule type" value="Genomic_DNA"/>
</dbReference>
<dbReference type="RefSeq" id="WP_000402075.1">
    <property type="nucleotide sequence ID" value="NC_004368.1"/>
</dbReference>
<dbReference type="SMR" id="P67251"/>
<dbReference type="KEGG" id="san:gbs1018"/>
<dbReference type="eggNOG" id="COG2739">
    <property type="taxonomic scope" value="Bacteria"/>
</dbReference>
<dbReference type="HOGENOM" id="CLU_129218_1_0_9"/>
<dbReference type="Proteomes" id="UP000000823">
    <property type="component" value="Chromosome"/>
</dbReference>
<dbReference type="Gene3D" id="1.10.10.10">
    <property type="entry name" value="Winged helix-like DNA-binding domain superfamily/Winged helix DNA-binding domain"/>
    <property type="match status" value="1"/>
</dbReference>
<dbReference type="HAMAP" id="MF_00245">
    <property type="entry name" value="UPF0122"/>
    <property type="match status" value="1"/>
</dbReference>
<dbReference type="InterPro" id="IPR013324">
    <property type="entry name" value="RNA_pol_sigma_r3/r4-like"/>
</dbReference>
<dbReference type="InterPro" id="IPR007394">
    <property type="entry name" value="UPF0122"/>
</dbReference>
<dbReference type="InterPro" id="IPR054831">
    <property type="entry name" value="UPF0122_fam_protein"/>
</dbReference>
<dbReference type="InterPro" id="IPR036388">
    <property type="entry name" value="WH-like_DNA-bd_sf"/>
</dbReference>
<dbReference type="NCBIfam" id="NF001066">
    <property type="entry name" value="PRK00118.1-1"/>
    <property type="match status" value="1"/>
</dbReference>
<dbReference type="NCBIfam" id="NF001068">
    <property type="entry name" value="PRK00118.1-4"/>
    <property type="match status" value="1"/>
</dbReference>
<dbReference type="NCBIfam" id="NF045758">
    <property type="entry name" value="YlxM"/>
    <property type="match status" value="1"/>
</dbReference>
<dbReference type="PANTHER" id="PTHR40083">
    <property type="entry name" value="UPF0122 PROTEIN CBO2450/CLC_2298"/>
    <property type="match status" value="1"/>
</dbReference>
<dbReference type="PANTHER" id="PTHR40083:SF1">
    <property type="entry name" value="UPF0122 PROTEIN YLXM"/>
    <property type="match status" value="1"/>
</dbReference>
<dbReference type="Pfam" id="PF04297">
    <property type="entry name" value="UPF0122"/>
    <property type="match status" value="1"/>
</dbReference>
<dbReference type="SUPFAM" id="SSF88659">
    <property type="entry name" value="Sigma3 and sigma4 domains of RNA polymerase sigma factors"/>
    <property type="match status" value="1"/>
</dbReference>
<accession>P67251</accession>
<accession>Q8DZW3</accession>
<accession>Q8E5L1</accession>
<name>Y1018_STRA3</name>
<proteinExistence type="inferred from homology"/>
<evidence type="ECO:0000255" key="1">
    <source>
        <dbReference type="HAMAP-Rule" id="MF_00245"/>
    </source>
</evidence>
<organism>
    <name type="scientific">Streptococcus agalactiae serotype III (strain NEM316)</name>
    <dbReference type="NCBI Taxonomy" id="211110"/>
    <lineage>
        <taxon>Bacteria</taxon>
        <taxon>Bacillati</taxon>
        <taxon>Bacillota</taxon>
        <taxon>Bacilli</taxon>
        <taxon>Lactobacillales</taxon>
        <taxon>Streptococcaceae</taxon>
        <taxon>Streptococcus</taxon>
    </lineage>
</organism>
<reference key="1">
    <citation type="journal article" date="2002" name="Mol. Microbiol.">
        <title>Genome sequence of Streptococcus agalactiae, a pathogen causing invasive neonatal disease.</title>
        <authorList>
            <person name="Glaser P."/>
            <person name="Rusniok C."/>
            <person name="Buchrieser C."/>
            <person name="Chevalier F."/>
            <person name="Frangeul L."/>
            <person name="Msadek T."/>
            <person name="Zouine M."/>
            <person name="Couve E."/>
            <person name="Lalioui L."/>
            <person name="Poyart C."/>
            <person name="Trieu-Cuot P."/>
            <person name="Kunst F."/>
        </authorList>
    </citation>
    <scope>NUCLEOTIDE SEQUENCE [LARGE SCALE GENOMIC DNA]</scope>
    <source>
        <strain>NEM316</strain>
    </source>
</reference>
<sequence length="110" mass="13080">MEIEKTNRMNALFEFYAALLTDKQMNYIELYYADDYSLAEIAEESGVSRQAVYDNIKRTEKILEAYEMKLHMYSDYIVRSQIFDDILEKYTDDAFLQEKISILSSIDNRD</sequence>
<protein>
    <recommendedName>
        <fullName evidence="1">UPF0122 protein gbs1018</fullName>
    </recommendedName>
</protein>
<comment type="function">
    <text evidence="1">Might take part in the signal recognition particle (SRP) pathway. This is inferred from the conservation of its genetic proximity to ftsY/ffh. May be a regulatory protein.</text>
</comment>
<comment type="similarity">
    <text evidence="1">Belongs to the UPF0122 family.</text>
</comment>
<feature type="chain" id="PRO_0000211883" description="UPF0122 protein gbs1018">
    <location>
        <begin position="1"/>
        <end position="110"/>
    </location>
</feature>
<gene>
    <name type="ordered locus">gbs1018</name>
</gene>